<comment type="function">
    <text evidence="1 4 8 9 10">Regulates the translocation of phosphorylated SRC to peripheral cell-matrix adhesion sites. Required for proper architecture of actin filaments. Plays a role in coupling actin fibers to cell junctions in endothelial cells and is therefore required for correct endothelial cell morphology via facilitating transcellular transmission of mechanical force resulting in endothelial cell elongation (PubMed:24806444). Required for the anchoring of radial actin fibers to CDH1 junction complexes at the cell membrane which facilitates organization of radial actin fiber structure and cellular response to contractile forces (PubMed:28842668). This contributes to maintenance of cell area, size, shape, epithelial sheet organization and trophectoderm cell properties that facilitate blastocyst zona hatching (PubMed:28842668). Inhibits the Wnt/beta-catenin signaling pathway, probably by recruiting CTNNB1 to recycling endosomes and hence preventing its translocation to the nucleus. Participates in angiogenesis. Activates the Hippo signaling pathway in response to cell contact inhibition via interaction with and ubiquitination by Crumbs complex-bound WWP1 (By similarity). Ubiquitinated AMOTL2 then interacts with LATS2 which in turn phosphorylates YAP1, excluding it from the nucleus and localizing it to the cytoplasm and tight junctions, therefore ultimately repressing YAP1-driven transcription of target genes (By similarity). Acts to inhibit WWTR1/TAZ transcriptional coactivator activity via sequestering WWTR1/TAZ in the cytoplasm and at tight junctions (By similarity). Regulates the size and protein composition of the podosome cortex and core at myofibril neuromuscular junctions (PubMed:23525008). Selectively promotes FGF-induced MAPK activation through SRC (By similarity). May play a role in the polarity, proliferation and migration of endothelial cells.</text>
</comment>
<comment type="subunit">
    <text evidence="2 4 7 9">Part of a complex composed of AMOTL2, MAGI1 and CDH5, within the complex AMOTL2 acts as a scaffold protein for the interaction of MAGI1 with CDH5 (PubMed:24806444). The complex is required for coupling actin fibers to cell junctions in endothelial cells (PubMed:24806444). Within the complex AMOTL2 (via its N-terminus) interacts with CDH5 (PubMed:24806444). Interacts (via N-terminus) with MAGI1 (By similarity). Interacts (via N-terminus) with ACTB; the interaction facilitates binding of cell junction complexes to actin fibers in endothelial cells (PubMed:24806444). Interacts with CDH1; the interaction may facilitate binding of radial actin fibers to cell junction complexes (By similarity). Interacts with SRC (By similarity). Interacts with YAP1; the interaction is required for ubiquitination of AMOTL2 and localization of YAP1 to tight junctions (PubMed:21205866). Interacts with WWP1; the interaction facilitates WWP1 interaction with the Crumbs complex and subsequent WWP1 translocation to the plasma membrane (By similarity). WWP1 interaction with the Crumbs complex promotes WWP1 monoubiquitination of AMOTL2 which subsequently activates the Hippo signaling pathway (By similarity). When ubiquitinated interacts with LATS2 (via UBA domain); the interaction promotes LATS2 phosphorylation of YAP1 (By similarity). Interacts (via PPXY motif) with WWTR1/TAZ (via WW domain); the interaction promotes WWTR1/TAZ localization to the cytoplasm and thereby inhibition of its transcriptional properties (By similarity). Interacts with PHLDB2; interaction may facilitate PHLDB2 localization to the myotube podosome cortex that surrounds the core (By similarity).</text>
</comment>
<comment type="subcellular location">
    <subcellularLocation>
        <location evidence="3">Recycling endosome</location>
    </subcellularLocation>
    <subcellularLocation>
        <location evidence="9">Cytoplasm</location>
    </subcellularLocation>
    <subcellularLocation>
        <location evidence="8">Cell projection</location>
        <location evidence="8">Podosome</location>
    </subcellularLocation>
    <subcellularLocation>
        <location evidence="9 10">Cell junction</location>
    </subcellularLocation>
</comment>
<comment type="tissue specificity">
    <text evidence="8">Expressed in skeletal muscle at neuromuscular junctions (at protein level).</text>
</comment>
<comment type="developmental stage">
    <text evidence="8 9 10">Expressed in the trophectoderm of the blastocyst at 4.5 dpc (at protein level) (PubMed:28842668). Expressed in the embryo at 5 dpc, expression continues until 19 dpc (PubMed:24806444). Expressed in skeletal muscle at neuromuscular junctions during development of postsynaptic membrane branching at P14 and P20 (at protein level) (PubMed:23525008).</text>
</comment>
<comment type="PTM">
    <text evidence="3">Phosphorylation at Tyr-107 is necessary for efficient binding to SRC and synergistically functioning with SRC to activate the downstream MAPK pathway.</text>
</comment>
<comment type="PTM">
    <text evidence="4">Monoubiquitinated at Lys-343 and Lys-404 by Crumbs complex-bound WWP1 (By similarity). De-ubiquitinated at Lys-343 and Lys-404 by USP9X; the interaction may be promoted by cell contact inhibition (By similarity). Deubiquitination of AMOTL2 negatively regulates Hippo signaling activation (By similarity).</text>
</comment>
<comment type="disruption phenotype">
    <text evidence="9 10">Knockout blastocysts show loss of radial actin fibers, a 60% increase in cell area and size of trophectoderm cells of the late stage blastocysts (PubMed:28842668). Loss of hexagonal shape of trophectoderm cells, instead cells present with an uneven pentagonal shape (PubMed:28842668). Significant reduction in the number of blastocysts that successfully hatch from the zona pellucida (PubMed:28842668). Endothelial cell conditional knockouts show no difference in litter size and progeny are viable (PubMed:24806444). Aortic constrictions close to the ventricular outflow tract and 80% of embryos show aorta lumen defects, this phenotype is accompanied by endothelial cells exhibiting a rounded shape at 9.5 dpc (PubMed:24806444).</text>
</comment>
<comment type="similarity">
    <text evidence="11">Belongs to the angiomotin family.</text>
</comment>
<comment type="sequence caution" evidence="11">
    <conflict type="erroneous initiation">
        <sequence resource="EMBL-CDS" id="BAC30740"/>
    </conflict>
    <text>Truncated N-terminus.</text>
</comment>
<comment type="sequence caution" evidence="11">
    <conflict type="frameshift">
        <sequence resource="EMBL-CDS" id="BAC36853"/>
    </conflict>
</comment>
<accession>Q8K371</accession>
<accession>B8JK80</accession>
<accession>Q3TPM1</accession>
<accession>Q7TPE4</accession>
<accession>Q8BP84</accession>
<accession>Q8BS08</accession>
<accession>Q9QUS0</accession>
<name>AMOL2_MOUSE</name>
<evidence type="ECO:0000250" key="1"/>
<evidence type="ECO:0000250" key="2">
    <source>
        <dbReference type="UniProtKB" id="A0A8I3QA39"/>
    </source>
</evidence>
<evidence type="ECO:0000250" key="3">
    <source>
        <dbReference type="UniProtKB" id="A1YB07"/>
    </source>
</evidence>
<evidence type="ECO:0000250" key="4">
    <source>
        <dbReference type="UniProtKB" id="Q9Y2J4"/>
    </source>
</evidence>
<evidence type="ECO:0000255" key="5"/>
<evidence type="ECO:0000256" key="6">
    <source>
        <dbReference type="SAM" id="MobiDB-lite"/>
    </source>
</evidence>
<evidence type="ECO:0000269" key="7">
    <source>
    </source>
</evidence>
<evidence type="ECO:0000269" key="8">
    <source>
    </source>
</evidence>
<evidence type="ECO:0000269" key="9">
    <source>
    </source>
</evidence>
<evidence type="ECO:0000269" key="10">
    <source>
    </source>
</evidence>
<evidence type="ECO:0000305" key="11"/>
<evidence type="ECO:0000305" key="12">
    <source>
    </source>
</evidence>
<evidence type="ECO:0000312" key="13">
    <source>
        <dbReference type="MGI" id="MGI:1929286"/>
    </source>
</evidence>
<evidence type="ECO:0007744" key="14">
    <source>
    </source>
</evidence>
<feature type="chain" id="PRO_0000190673" description="Angiomotin-like protein 2">
    <location>
        <begin position="1"/>
        <end position="772"/>
    </location>
</feature>
<feature type="region of interest" description="Disordered" evidence="6">
    <location>
        <begin position="41"/>
        <end position="158"/>
    </location>
</feature>
<feature type="region of interest" description="Required for interaction with CDH5" evidence="9">
    <location>
        <begin position="101"/>
        <end position="303"/>
    </location>
</feature>
<feature type="region of interest" description="Disordered" evidence="6">
    <location>
        <begin position="170"/>
        <end position="239"/>
    </location>
</feature>
<feature type="region of interest" description="Required for interaction with CDH1" evidence="4">
    <location>
        <begin position="221"/>
        <end position="303"/>
    </location>
</feature>
<feature type="region of interest" description="Disordered" evidence="6">
    <location>
        <begin position="260"/>
        <end position="299"/>
    </location>
</feature>
<feature type="region of interest" description="Disordered" evidence="6">
    <location>
        <begin position="596"/>
        <end position="615"/>
    </location>
</feature>
<feature type="region of interest" description="Disordered" evidence="6">
    <location>
        <begin position="680"/>
        <end position="752"/>
    </location>
</feature>
<feature type="coiled-coil region" evidence="5">
    <location>
        <begin position="305"/>
        <end position="578"/>
    </location>
</feature>
<feature type="short sequence motif" description="PDZ-binding" evidence="12">
    <location>
        <begin position="769"/>
        <end position="772"/>
    </location>
</feature>
<feature type="compositionally biased region" description="Basic and acidic residues" evidence="6">
    <location>
        <begin position="80"/>
        <end position="91"/>
    </location>
</feature>
<feature type="compositionally biased region" description="Basic and acidic residues" evidence="6">
    <location>
        <begin position="100"/>
        <end position="112"/>
    </location>
</feature>
<feature type="compositionally biased region" description="Basic and acidic residues" evidence="6">
    <location>
        <begin position="142"/>
        <end position="153"/>
    </location>
</feature>
<feature type="compositionally biased region" description="Polar residues" evidence="6">
    <location>
        <begin position="178"/>
        <end position="191"/>
    </location>
</feature>
<feature type="compositionally biased region" description="Pro residues" evidence="6">
    <location>
        <begin position="197"/>
        <end position="214"/>
    </location>
</feature>
<feature type="compositionally biased region" description="Basic and acidic residues" evidence="6">
    <location>
        <begin position="686"/>
        <end position="699"/>
    </location>
</feature>
<feature type="compositionally biased region" description="Polar residues" evidence="6">
    <location>
        <begin position="718"/>
        <end position="733"/>
    </location>
</feature>
<feature type="site" description="Required for interaction with MAGI1 and ACTB" evidence="9">
    <location>
        <position position="107"/>
    </location>
</feature>
<feature type="site" description="Required for interaction with YAP1 and ubiquitination at K-343 and K-404" evidence="4">
    <location>
        <position position="214"/>
    </location>
</feature>
<feature type="modified residue" description="Phosphotyrosine; by FGFR1" evidence="3">
    <location>
        <position position="107"/>
    </location>
</feature>
<feature type="modified residue" description="Phosphoserine" evidence="14">
    <location>
        <position position="752"/>
    </location>
</feature>
<feature type="modified residue" description="Phosphoserine" evidence="14">
    <location>
        <position position="755"/>
    </location>
</feature>
<feature type="cross-link" description="Glycyl lysine isopeptide (Lys-Gly) (interchain with G-Cter in ubiquitin)" evidence="4">
    <location>
        <position position="343"/>
    </location>
</feature>
<feature type="cross-link" description="Glycyl lysine isopeptide (Lys-Gly) (interchain with G-Cter in ubiquitin)" evidence="4">
    <location>
        <position position="404"/>
    </location>
</feature>
<feature type="mutagenesis site" description="Abolishes interaction with MAGI1 and ACTB. No effect on interaction with CDH5." evidence="9">
    <original>Y</original>
    <variation>A</variation>
    <location>
        <position position="107"/>
    </location>
</feature>
<feature type="mutagenesis site" description="No effect on interaction with CDH5, MAGI1 and ACTB." evidence="9">
    <original>Y</original>
    <variation>A</variation>
    <location>
        <position position="214"/>
    </location>
</feature>
<feature type="sequence conflict" description="In Ref. 1; BAC36853." evidence="11" ref="1">
    <original>LLQ</original>
    <variation>ILK</variation>
    <location>
        <begin position="163"/>
        <end position="165"/>
    </location>
</feature>
<feature type="sequence conflict" description="In Ref. 5; AAD56362." evidence="11" ref="5">
    <original>QLARSQQGPQP</original>
    <variation>EPPGFLGDRST</variation>
    <location>
        <begin position="187"/>
        <end position="197"/>
    </location>
</feature>
<feature type="sequence conflict" description="In Ref. 5; AAD56362." evidence="11" ref="5">
    <original>Q</original>
    <variation>H</variation>
    <location>
        <position position="257"/>
    </location>
</feature>
<feature type="sequence conflict" description="In Ref. 1; BAC36853." evidence="11" ref="1">
    <original>D</original>
    <variation>N</variation>
    <location>
        <position position="389"/>
    </location>
</feature>
<feature type="sequence conflict" description="In Ref. 1; BAC36853." evidence="11" ref="1">
    <original>H</original>
    <variation>N</variation>
    <location>
        <position position="450"/>
    </location>
</feature>
<feature type="sequence conflict" description="In Ref. 5; AAD56362/AAD56363." evidence="11" ref="5">
    <original>K</original>
    <variation>R</variation>
    <location>
        <position position="481"/>
    </location>
</feature>
<feature type="sequence conflict" description="In Ref. 5; AAD56362/AAD56363." evidence="11" ref="5">
    <original>L</original>
    <variation>P</variation>
    <location>
        <position position="643"/>
    </location>
</feature>
<feature type="sequence conflict" description="In Ref. 5; AAD56362/AAD56363." evidence="11" ref="5">
    <original>R</original>
    <variation>W</variation>
    <location>
        <position position="660"/>
    </location>
</feature>
<keyword id="KW-0965">Cell junction</keyword>
<keyword id="KW-0966">Cell projection</keyword>
<keyword id="KW-0175">Coiled coil</keyword>
<keyword id="KW-0963">Cytoplasm</keyword>
<keyword id="KW-0967">Endosome</keyword>
<keyword id="KW-1017">Isopeptide bond</keyword>
<keyword id="KW-0597">Phosphoprotein</keyword>
<keyword id="KW-1185">Reference proteome</keyword>
<keyword id="KW-0832">Ubl conjugation</keyword>
<keyword id="KW-0879">Wnt signaling pathway</keyword>
<organism>
    <name type="scientific">Mus musculus</name>
    <name type="common">Mouse</name>
    <dbReference type="NCBI Taxonomy" id="10090"/>
    <lineage>
        <taxon>Eukaryota</taxon>
        <taxon>Metazoa</taxon>
        <taxon>Chordata</taxon>
        <taxon>Craniata</taxon>
        <taxon>Vertebrata</taxon>
        <taxon>Euteleostomi</taxon>
        <taxon>Mammalia</taxon>
        <taxon>Eutheria</taxon>
        <taxon>Euarchontoglires</taxon>
        <taxon>Glires</taxon>
        <taxon>Rodentia</taxon>
        <taxon>Myomorpha</taxon>
        <taxon>Muroidea</taxon>
        <taxon>Muridae</taxon>
        <taxon>Murinae</taxon>
        <taxon>Mus</taxon>
        <taxon>Mus</taxon>
    </lineage>
</organism>
<gene>
    <name evidence="13" type="primary">Amotl2</name>
</gene>
<dbReference type="EMBL" id="AK040912">
    <property type="protein sequence ID" value="BAC30740.1"/>
    <property type="status" value="ALT_INIT"/>
    <property type="molecule type" value="mRNA"/>
</dbReference>
<dbReference type="EMBL" id="AK077535">
    <property type="protein sequence ID" value="BAC36853.1"/>
    <property type="status" value="ALT_FRAME"/>
    <property type="molecule type" value="mRNA"/>
</dbReference>
<dbReference type="EMBL" id="AK141348">
    <property type="protein sequence ID" value="BAE24658.1"/>
    <property type="molecule type" value="mRNA"/>
</dbReference>
<dbReference type="EMBL" id="AK164279">
    <property type="protein sequence ID" value="BAE37715.1"/>
    <property type="molecule type" value="mRNA"/>
</dbReference>
<dbReference type="EMBL" id="CT573150">
    <property type="status" value="NOT_ANNOTATED_CDS"/>
    <property type="molecule type" value="Genomic_DNA"/>
</dbReference>
<dbReference type="EMBL" id="CH466560">
    <property type="protein sequence ID" value="EDL21058.1"/>
    <property type="molecule type" value="Genomic_DNA"/>
</dbReference>
<dbReference type="EMBL" id="BC027824">
    <property type="protein sequence ID" value="AAH27824.1"/>
    <property type="molecule type" value="mRNA"/>
</dbReference>
<dbReference type="EMBL" id="AF175967">
    <property type="protein sequence ID" value="AAD56362.2"/>
    <property type="molecule type" value="mRNA"/>
</dbReference>
<dbReference type="EMBL" id="AF175968">
    <property type="protein sequence ID" value="AAD56363.1"/>
    <property type="molecule type" value="mRNA"/>
</dbReference>
<dbReference type="CCDS" id="CCDS40745.1"/>
<dbReference type="RefSeq" id="NP_001408227.1">
    <property type="nucleotide sequence ID" value="NM_001421298.1"/>
</dbReference>
<dbReference type="RefSeq" id="NP_001408230.1">
    <property type="nucleotide sequence ID" value="NM_001421301.1"/>
</dbReference>
<dbReference type="RefSeq" id="NP_062738.2">
    <property type="nucleotide sequence ID" value="NM_019764.2"/>
</dbReference>
<dbReference type="RefSeq" id="XP_006511834.2">
    <property type="nucleotide sequence ID" value="XM_006511771.3"/>
</dbReference>
<dbReference type="RefSeq" id="XP_006511836.1">
    <property type="nucleotide sequence ID" value="XM_006511773.2"/>
</dbReference>
<dbReference type="SMR" id="Q8K371"/>
<dbReference type="BioGRID" id="207908">
    <property type="interactions" value="7"/>
</dbReference>
<dbReference type="FunCoup" id="Q8K371">
    <property type="interactions" value="426"/>
</dbReference>
<dbReference type="IntAct" id="Q8K371">
    <property type="interactions" value="1"/>
</dbReference>
<dbReference type="STRING" id="10090.ENSMUSP00000035121"/>
<dbReference type="GlyGen" id="Q8K371">
    <property type="glycosylation" value="1 site, 1 N-linked glycan (1 site)"/>
</dbReference>
<dbReference type="iPTMnet" id="Q8K371"/>
<dbReference type="PhosphoSitePlus" id="Q8K371"/>
<dbReference type="jPOST" id="Q8K371"/>
<dbReference type="PaxDb" id="10090-ENSMUSP00000035121"/>
<dbReference type="ProteomicsDB" id="296406"/>
<dbReference type="Pumba" id="Q8K371"/>
<dbReference type="Antibodypedia" id="33394">
    <property type="antibodies" value="107 antibodies from 23 providers"/>
</dbReference>
<dbReference type="DNASU" id="56332"/>
<dbReference type="Ensembl" id="ENSMUST00000035121.14">
    <property type="protein sequence ID" value="ENSMUSP00000035121.8"/>
    <property type="gene ID" value="ENSMUSG00000032531.16"/>
</dbReference>
<dbReference type="GeneID" id="56332"/>
<dbReference type="KEGG" id="mmu:56332"/>
<dbReference type="UCSC" id="uc009rfx.1">
    <property type="organism name" value="mouse"/>
</dbReference>
<dbReference type="AGR" id="MGI:1929286"/>
<dbReference type="CTD" id="51421"/>
<dbReference type="MGI" id="MGI:1929286">
    <property type="gene designation" value="Amotl2"/>
</dbReference>
<dbReference type="VEuPathDB" id="HostDB:ENSMUSG00000032531"/>
<dbReference type="eggNOG" id="ENOG502QR7W">
    <property type="taxonomic scope" value="Eukaryota"/>
</dbReference>
<dbReference type="GeneTree" id="ENSGT00940000156577"/>
<dbReference type="InParanoid" id="Q8K371"/>
<dbReference type="PhylomeDB" id="Q8K371"/>
<dbReference type="TreeFam" id="TF333368"/>
<dbReference type="Reactome" id="R-MMU-2028269">
    <property type="pathway name" value="Signaling by Hippo"/>
</dbReference>
<dbReference type="BioGRID-ORCS" id="56332">
    <property type="hits" value="7 hits in 75 CRISPR screens"/>
</dbReference>
<dbReference type="ChiTaRS" id="Amotl2">
    <property type="organism name" value="mouse"/>
</dbReference>
<dbReference type="PRO" id="PR:Q8K371"/>
<dbReference type="Proteomes" id="UP000000589">
    <property type="component" value="Chromosome 9"/>
</dbReference>
<dbReference type="RNAct" id="Q8K371">
    <property type="molecule type" value="protein"/>
</dbReference>
<dbReference type="Bgee" id="ENSMUSG00000032531">
    <property type="expression patterns" value="Expressed in vault of skull and 252 other cell types or tissues"/>
</dbReference>
<dbReference type="ExpressionAtlas" id="Q8K371">
    <property type="expression patterns" value="baseline and differential"/>
</dbReference>
<dbReference type="GO" id="GO:0016324">
    <property type="term" value="C:apical plasma membrane"/>
    <property type="evidence" value="ECO:0000314"/>
    <property type="project" value="MGI"/>
</dbReference>
<dbReference type="GO" id="GO:0005923">
    <property type="term" value="C:bicellular tight junction"/>
    <property type="evidence" value="ECO:0000314"/>
    <property type="project" value="MGI"/>
</dbReference>
<dbReference type="GO" id="GO:0030054">
    <property type="term" value="C:cell junction"/>
    <property type="evidence" value="ECO:0000314"/>
    <property type="project" value="UniProtKB"/>
</dbReference>
<dbReference type="GO" id="GO:0042995">
    <property type="term" value="C:cell projection"/>
    <property type="evidence" value="ECO:0007669"/>
    <property type="project" value="UniProtKB-KW"/>
</dbReference>
<dbReference type="GO" id="GO:0005737">
    <property type="term" value="C:cytoplasm"/>
    <property type="evidence" value="ECO:0000314"/>
    <property type="project" value="UniProtKB"/>
</dbReference>
<dbReference type="GO" id="GO:0031410">
    <property type="term" value="C:cytoplasmic vesicle"/>
    <property type="evidence" value="ECO:0000314"/>
    <property type="project" value="MGI"/>
</dbReference>
<dbReference type="GO" id="GO:0002102">
    <property type="term" value="C:podosome"/>
    <property type="evidence" value="ECO:0000250"/>
    <property type="project" value="UniProtKB"/>
</dbReference>
<dbReference type="GO" id="GO:0055037">
    <property type="term" value="C:recycling endosome"/>
    <property type="evidence" value="ECO:0007669"/>
    <property type="project" value="UniProtKB-SubCell"/>
</dbReference>
<dbReference type="GO" id="GO:0051015">
    <property type="term" value="F:actin filament binding"/>
    <property type="evidence" value="ECO:0000315"/>
    <property type="project" value="UniProtKB"/>
</dbReference>
<dbReference type="GO" id="GO:0042802">
    <property type="term" value="F:identical protein binding"/>
    <property type="evidence" value="ECO:0000314"/>
    <property type="project" value="MGI"/>
</dbReference>
<dbReference type="GO" id="GO:0044877">
    <property type="term" value="F:protein-containing complex binding"/>
    <property type="evidence" value="ECO:0000353"/>
    <property type="project" value="UniProtKB"/>
</dbReference>
<dbReference type="GO" id="GO:0001886">
    <property type="term" value="P:endothelial cell morphogenesis"/>
    <property type="evidence" value="ECO:0000315"/>
    <property type="project" value="UniProtKB"/>
</dbReference>
<dbReference type="GO" id="GO:0000122">
    <property type="term" value="P:negative regulation of transcription by RNA polymerase II"/>
    <property type="evidence" value="ECO:0000250"/>
    <property type="project" value="UniProtKB"/>
</dbReference>
<dbReference type="GO" id="GO:1903829">
    <property type="term" value="P:positive regulation of protein localization"/>
    <property type="evidence" value="ECO:0000250"/>
    <property type="project" value="UniProtKB"/>
</dbReference>
<dbReference type="GO" id="GO:0016055">
    <property type="term" value="P:Wnt signaling pathway"/>
    <property type="evidence" value="ECO:0007669"/>
    <property type="project" value="UniProtKB-KW"/>
</dbReference>
<dbReference type="InterPro" id="IPR009114">
    <property type="entry name" value="Angiomotin"/>
</dbReference>
<dbReference type="InterPro" id="IPR051747">
    <property type="entry name" value="Angiomotin-like"/>
</dbReference>
<dbReference type="InterPro" id="IPR024646">
    <property type="entry name" value="Angiomotin_C"/>
</dbReference>
<dbReference type="PANTHER" id="PTHR14826">
    <property type="entry name" value="ANGIOMOTIN"/>
    <property type="match status" value="1"/>
</dbReference>
<dbReference type="PANTHER" id="PTHR14826:SF3">
    <property type="entry name" value="ANGIOMOTIN-LIKE PROTEIN 2"/>
    <property type="match status" value="1"/>
</dbReference>
<dbReference type="Pfam" id="PF12240">
    <property type="entry name" value="Angiomotin_C"/>
    <property type="match status" value="1"/>
</dbReference>
<dbReference type="PRINTS" id="PR01807">
    <property type="entry name" value="ANGIOMOTIN"/>
</dbReference>
<sequence length="772" mass="85278">MRTLEDSSGTVLHRLIQEQLRYGNLTETRTLLAIQQQALRGGAGAGGTGSPQASLEIGAPEDSQVLQQATRQEPQGQEHQGGETHLAENRLYRLCPQPSKGEELPTYEEAKAHSQYYAAQQAGSRPHVGDRDPRGGVSGGGRRQDEALRELRHGHVRSLSERLLQLSLERNGARVPSHMSSSHSFPQLARSQQGPQPRGPPAEGPEPRGPPPQYPHAVMAQETAAVTDPRYRPRSSPHFQHAEVRILQAQVPPVFLQQQQYQYLPQPQEHSPPLHPAALGHGPPSSFGPPAVEGPPSAQATLGSAHLAQMETVLRENARLQRDNERLQRELESTSEKAGRIEKLENEIQRLSEAHESLMRTSSKREALEKTMRNKMDGEMRRLQDFNRDLRERLESANRHLASKTQEAQAGSQDMVAKLLAQSYEQQQEQEKLEREMALLRGAIEDQRRHAELLEQALGNAQSRAARAEEELRKKQAYVEKVERLQQALGQLQAACEKREQLELRLRTRLEQELKALRAQQRQTGTLAGGGGSHGGSAELSALRLSEQLREKEEQILALEADMTKWEQKYLEERAMRQFAMDAAATAAAQRDTTLIRHSPQPSPSSSFNEGLLPGNHRHQEMESRLKVLHAQILEKDAVIKVLQQRSRKDPGKATQGTLRPAKSVPSIFAAAVGTQGWQGLVSSERQTDARPAGDRVPAEEPPATAPLPAHTKHGSRDGSTQTDGPADNTSACLASEPDGLLGCNSSQRTPSLDSIAATRVQDLSDMVEILI</sequence>
<proteinExistence type="evidence at protein level"/>
<reference key="1">
    <citation type="journal article" date="2005" name="Science">
        <title>The transcriptional landscape of the mammalian genome.</title>
        <authorList>
            <person name="Carninci P."/>
            <person name="Kasukawa T."/>
            <person name="Katayama S."/>
            <person name="Gough J."/>
            <person name="Frith M.C."/>
            <person name="Maeda N."/>
            <person name="Oyama R."/>
            <person name="Ravasi T."/>
            <person name="Lenhard B."/>
            <person name="Wells C."/>
            <person name="Kodzius R."/>
            <person name="Shimokawa K."/>
            <person name="Bajic V.B."/>
            <person name="Brenner S.E."/>
            <person name="Batalov S."/>
            <person name="Forrest A.R."/>
            <person name="Zavolan M."/>
            <person name="Davis M.J."/>
            <person name="Wilming L.G."/>
            <person name="Aidinis V."/>
            <person name="Allen J.E."/>
            <person name="Ambesi-Impiombato A."/>
            <person name="Apweiler R."/>
            <person name="Aturaliya R.N."/>
            <person name="Bailey T.L."/>
            <person name="Bansal M."/>
            <person name="Baxter L."/>
            <person name="Beisel K.W."/>
            <person name="Bersano T."/>
            <person name="Bono H."/>
            <person name="Chalk A.M."/>
            <person name="Chiu K.P."/>
            <person name="Choudhary V."/>
            <person name="Christoffels A."/>
            <person name="Clutterbuck D.R."/>
            <person name="Crowe M.L."/>
            <person name="Dalla E."/>
            <person name="Dalrymple B.P."/>
            <person name="de Bono B."/>
            <person name="Della Gatta G."/>
            <person name="di Bernardo D."/>
            <person name="Down T."/>
            <person name="Engstrom P."/>
            <person name="Fagiolini M."/>
            <person name="Faulkner G."/>
            <person name="Fletcher C.F."/>
            <person name="Fukushima T."/>
            <person name="Furuno M."/>
            <person name="Futaki S."/>
            <person name="Gariboldi M."/>
            <person name="Georgii-Hemming P."/>
            <person name="Gingeras T.R."/>
            <person name="Gojobori T."/>
            <person name="Green R.E."/>
            <person name="Gustincich S."/>
            <person name="Harbers M."/>
            <person name="Hayashi Y."/>
            <person name="Hensch T.K."/>
            <person name="Hirokawa N."/>
            <person name="Hill D."/>
            <person name="Huminiecki L."/>
            <person name="Iacono M."/>
            <person name="Ikeo K."/>
            <person name="Iwama A."/>
            <person name="Ishikawa T."/>
            <person name="Jakt M."/>
            <person name="Kanapin A."/>
            <person name="Katoh M."/>
            <person name="Kawasawa Y."/>
            <person name="Kelso J."/>
            <person name="Kitamura H."/>
            <person name="Kitano H."/>
            <person name="Kollias G."/>
            <person name="Krishnan S.P."/>
            <person name="Kruger A."/>
            <person name="Kummerfeld S.K."/>
            <person name="Kurochkin I.V."/>
            <person name="Lareau L.F."/>
            <person name="Lazarevic D."/>
            <person name="Lipovich L."/>
            <person name="Liu J."/>
            <person name="Liuni S."/>
            <person name="McWilliam S."/>
            <person name="Madan Babu M."/>
            <person name="Madera M."/>
            <person name="Marchionni L."/>
            <person name="Matsuda H."/>
            <person name="Matsuzawa S."/>
            <person name="Miki H."/>
            <person name="Mignone F."/>
            <person name="Miyake S."/>
            <person name="Morris K."/>
            <person name="Mottagui-Tabar S."/>
            <person name="Mulder N."/>
            <person name="Nakano N."/>
            <person name="Nakauchi H."/>
            <person name="Ng P."/>
            <person name="Nilsson R."/>
            <person name="Nishiguchi S."/>
            <person name="Nishikawa S."/>
            <person name="Nori F."/>
            <person name="Ohara O."/>
            <person name="Okazaki Y."/>
            <person name="Orlando V."/>
            <person name="Pang K.C."/>
            <person name="Pavan W.J."/>
            <person name="Pavesi G."/>
            <person name="Pesole G."/>
            <person name="Petrovsky N."/>
            <person name="Piazza S."/>
            <person name="Reed J."/>
            <person name="Reid J.F."/>
            <person name="Ring B.Z."/>
            <person name="Ringwald M."/>
            <person name="Rost B."/>
            <person name="Ruan Y."/>
            <person name="Salzberg S.L."/>
            <person name="Sandelin A."/>
            <person name="Schneider C."/>
            <person name="Schoenbach C."/>
            <person name="Sekiguchi K."/>
            <person name="Semple C.A."/>
            <person name="Seno S."/>
            <person name="Sessa L."/>
            <person name="Sheng Y."/>
            <person name="Shibata Y."/>
            <person name="Shimada H."/>
            <person name="Shimada K."/>
            <person name="Silva D."/>
            <person name="Sinclair B."/>
            <person name="Sperling S."/>
            <person name="Stupka E."/>
            <person name="Sugiura K."/>
            <person name="Sultana R."/>
            <person name="Takenaka Y."/>
            <person name="Taki K."/>
            <person name="Tammoja K."/>
            <person name="Tan S.L."/>
            <person name="Tang S."/>
            <person name="Taylor M.S."/>
            <person name="Tegner J."/>
            <person name="Teichmann S.A."/>
            <person name="Ueda H.R."/>
            <person name="van Nimwegen E."/>
            <person name="Verardo R."/>
            <person name="Wei C.L."/>
            <person name="Yagi K."/>
            <person name="Yamanishi H."/>
            <person name="Zabarovsky E."/>
            <person name="Zhu S."/>
            <person name="Zimmer A."/>
            <person name="Hide W."/>
            <person name="Bult C."/>
            <person name="Grimmond S.M."/>
            <person name="Teasdale R.D."/>
            <person name="Liu E.T."/>
            <person name="Brusic V."/>
            <person name="Quackenbush J."/>
            <person name="Wahlestedt C."/>
            <person name="Mattick J.S."/>
            <person name="Hume D.A."/>
            <person name="Kai C."/>
            <person name="Sasaki D."/>
            <person name="Tomaru Y."/>
            <person name="Fukuda S."/>
            <person name="Kanamori-Katayama M."/>
            <person name="Suzuki M."/>
            <person name="Aoki J."/>
            <person name="Arakawa T."/>
            <person name="Iida J."/>
            <person name="Imamura K."/>
            <person name="Itoh M."/>
            <person name="Kato T."/>
            <person name="Kawaji H."/>
            <person name="Kawagashira N."/>
            <person name="Kawashima T."/>
            <person name="Kojima M."/>
            <person name="Kondo S."/>
            <person name="Konno H."/>
            <person name="Nakano K."/>
            <person name="Ninomiya N."/>
            <person name="Nishio T."/>
            <person name="Okada M."/>
            <person name="Plessy C."/>
            <person name="Shibata K."/>
            <person name="Shiraki T."/>
            <person name="Suzuki S."/>
            <person name="Tagami M."/>
            <person name="Waki K."/>
            <person name="Watahiki A."/>
            <person name="Okamura-Oho Y."/>
            <person name="Suzuki H."/>
            <person name="Kawai J."/>
            <person name="Hayashizaki Y."/>
        </authorList>
    </citation>
    <scope>NUCLEOTIDE SEQUENCE [LARGE SCALE MRNA]</scope>
    <source>
        <strain>C57BL/6J</strain>
        <tissue>Embryo</tissue>
    </source>
</reference>
<reference key="2">
    <citation type="journal article" date="2009" name="PLoS Biol.">
        <title>Lineage-specific biology revealed by a finished genome assembly of the mouse.</title>
        <authorList>
            <person name="Church D.M."/>
            <person name="Goodstadt L."/>
            <person name="Hillier L.W."/>
            <person name="Zody M.C."/>
            <person name="Goldstein S."/>
            <person name="She X."/>
            <person name="Bult C.J."/>
            <person name="Agarwala R."/>
            <person name="Cherry J.L."/>
            <person name="DiCuccio M."/>
            <person name="Hlavina W."/>
            <person name="Kapustin Y."/>
            <person name="Meric P."/>
            <person name="Maglott D."/>
            <person name="Birtle Z."/>
            <person name="Marques A.C."/>
            <person name="Graves T."/>
            <person name="Zhou S."/>
            <person name="Teague B."/>
            <person name="Potamousis K."/>
            <person name="Churas C."/>
            <person name="Place M."/>
            <person name="Herschleb J."/>
            <person name="Runnheim R."/>
            <person name="Forrest D."/>
            <person name="Amos-Landgraf J."/>
            <person name="Schwartz D.C."/>
            <person name="Cheng Z."/>
            <person name="Lindblad-Toh K."/>
            <person name="Eichler E.E."/>
            <person name="Ponting C.P."/>
        </authorList>
    </citation>
    <scope>NUCLEOTIDE SEQUENCE [LARGE SCALE GENOMIC DNA]</scope>
    <source>
        <strain>C57BL/6J</strain>
    </source>
</reference>
<reference key="3">
    <citation type="submission" date="2005-07" db="EMBL/GenBank/DDBJ databases">
        <authorList>
            <person name="Mural R.J."/>
            <person name="Adams M.D."/>
            <person name="Myers E.W."/>
            <person name="Smith H.O."/>
            <person name="Venter J.C."/>
        </authorList>
    </citation>
    <scope>NUCLEOTIDE SEQUENCE [LARGE SCALE GENOMIC DNA]</scope>
</reference>
<reference key="4">
    <citation type="journal article" date="2004" name="Genome Res.">
        <title>The status, quality, and expansion of the NIH full-length cDNA project: the Mammalian Gene Collection (MGC).</title>
        <authorList>
            <consortium name="The MGC Project Team"/>
        </authorList>
    </citation>
    <scope>NUCLEOTIDE SEQUENCE [LARGE SCALE MRNA]</scope>
    <source>
        <strain>FVB/N</strain>
        <tissue>Mammary tumor</tissue>
    </source>
</reference>
<reference key="5">
    <citation type="journal article" date="2002" name="Gene">
        <title>Angiomotin belongs to a novel protein family with conserved coiled-coil and PDZ binding domains.</title>
        <authorList>
            <person name="Bratt A."/>
            <person name="Wilson W.J."/>
            <person name="Troyanovsky B."/>
            <person name="Aase K."/>
            <person name="Kessler R."/>
            <person name="Van Meir E.G."/>
            <person name="Holmgren L."/>
        </authorList>
    </citation>
    <scope>NUCLEOTIDE SEQUENCE [MRNA] OF 187-772</scope>
    <source>
        <tissue>Glioblastoma</tissue>
    </source>
</reference>
<reference key="6">
    <citation type="journal article" date="2003" name="Gene">
        <authorList>
            <person name="Bratt A."/>
            <person name="Wilson W.J."/>
            <person name="Troyanovsky B."/>
            <person name="Aase K."/>
            <person name="Kessler R."/>
            <person name="Van Meir E.G."/>
            <person name="Holmgren L."/>
        </authorList>
    </citation>
    <scope>ERRATUM OF PUBMED:12406577</scope>
</reference>
<reference key="7">
    <citation type="journal article" date="2010" name="Cell">
        <title>A tissue-specific atlas of mouse protein phosphorylation and expression.</title>
        <authorList>
            <person name="Huttlin E.L."/>
            <person name="Jedrychowski M.P."/>
            <person name="Elias J.E."/>
            <person name="Goswami T."/>
            <person name="Rad R."/>
            <person name="Beausoleil S.A."/>
            <person name="Villen J."/>
            <person name="Haas W."/>
            <person name="Sowa M.E."/>
            <person name="Gygi S.P."/>
        </authorList>
    </citation>
    <scope>PHOSPHORYLATION [LARGE SCALE ANALYSIS] AT SER-752 AND SER-755</scope>
    <scope>IDENTIFICATION BY MASS SPECTROMETRY [LARGE SCALE ANALYSIS]</scope>
    <source>
        <tissue>Kidney</tissue>
    </source>
</reference>
<reference key="8">
    <citation type="journal article" date="2011" name="Genes Dev.">
        <title>Angiomotin is a novel Hippo pathway component that inhibits YAP oncoprotein.</title>
        <authorList>
            <person name="Zhao B."/>
            <person name="Li L."/>
            <person name="Lu Q."/>
            <person name="Wang L.H."/>
            <person name="Liu C.Y."/>
            <person name="Lei Q."/>
            <person name="Guan K.L."/>
        </authorList>
    </citation>
    <scope>INTERACTION WITH YAP1</scope>
</reference>
<reference key="9">
    <citation type="journal article" date="2013" name="J. Cell Sci.">
        <title>Amotl2 interacts with LL5beta, localizes to podosomes and regulates postsynaptic differentiation in muscle.</title>
        <authorList>
            <person name="Proszynski T.J."/>
            <person name="Sanes J.R."/>
        </authorList>
    </citation>
    <scope>FUNCTION</scope>
    <scope>SUBCELLULAR LOCATION</scope>
    <scope>TISSUE SPECIFICITY</scope>
    <scope>DEVELOPMENTAL STAGE</scope>
</reference>
<reference key="10">
    <citation type="journal article" date="2014" name="Nat. Commun.">
        <title>AmotL2 links VE-cadherin to contractile actin fibres necessary for aortic lumen expansion.</title>
        <authorList>
            <person name="Hultin S."/>
            <person name="Zheng Y."/>
            <person name="Mojallal M."/>
            <person name="Vertuani S."/>
            <person name="Gentili C."/>
            <person name="Balland M."/>
            <person name="Milloud R."/>
            <person name="Belting H.G."/>
            <person name="Affolter M."/>
            <person name="Helker C.S."/>
            <person name="Adams R.H."/>
            <person name="Herzog W."/>
            <person name="Uhlen P."/>
            <person name="Majumdar A."/>
            <person name="Holmgren L."/>
        </authorList>
    </citation>
    <scope>FUNCTION</scope>
    <scope>IDENTIFICATION IN A COMPLEX WITH CDH5 AND MAGI1</scope>
    <scope>INTERACTION WITH CDH5; MGI1 AND ACTB</scope>
    <scope>SUBCELLULAR LOCATION</scope>
    <scope>DEVELOPMENTAL STAGE</scope>
    <scope>DISRUPTION PHENOTYPE</scope>
    <scope>MUTAGENESIS OF TYR-107 AND TYR-214</scope>
</reference>
<reference key="11">
    <citation type="journal article" date="2017" name="Sci. Rep.">
        <title>The E-cadherin/AmotL2 complex organizes actin filaments required for epithelial hexagonal packing and blastocyst hatching.</title>
        <authorList>
            <person name="Hildebrand S."/>
            <person name="Hultin S."/>
            <person name="Subramani A."/>
            <person name="Petropoulos S."/>
            <person name="Zhang Y."/>
            <person name="Cao X."/>
            <person name="Mpindi J."/>
            <person name="Kalloniemi O."/>
            <person name="Johansson S."/>
            <person name="Majumdar A."/>
            <person name="Lanner F."/>
            <person name="Holmgren L."/>
        </authorList>
    </citation>
    <scope>FUNCTION</scope>
    <scope>SUBCELLULAR LOCATION</scope>
    <scope>DEVELOPMENTAL STAGE</scope>
    <scope>DISRUPTION PHENOTYPE</scope>
</reference>
<protein>
    <recommendedName>
        <fullName evidence="11">Angiomotin-like protein 2</fullName>
    </recommendedName>
</protein>